<evidence type="ECO:0000255" key="1">
    <source>
        <dbReference type="HAMAP-Rule" id="MF_00797"/>
    </source>
</evidence>
<reference key="1">
    <citation type="submission" date="2006-03" db="EMBL/GenBank/DDBJ databases">
        <title>Complete sequence of chromosome of Nitrobacter hamburgensis X14.</title>
        <authorList>
            <consortium name="US DOE Joint Genome Institute"/>
            <person name="Copeland A."/>
            <person name="Lucas S."/>
            <person name="Lapidus A."/>
            <person name="Barry K."/>
            <person name="Detter J.C."/>
            <person name="Glavina del Rio T."/>
            <person name="Hammon N."/>
            <person name="Israni S."/>
            <person name="Dalin E."/>
            <person name="Tice H."/>
            <person name="Pitluck S."/>
            <person name="Chain P."/>
            <person name="Malfatti S."/>
            <person name="Shin M."/>
            <person name="Vergez L."/>
            <person name="Schmutz J."/>
            <person name="Larimer F."/>
            <person name="Land M."/>
            <person name="Hauser L."/>
            <person name="Kyrpides N."/>
            <person name="Ivanova N."/>
            <person name="Ward B."/>
            <person name="Arp D."/>
            <person name="Klotz M."/>
            <person name="Stein L."/>
            <person name="O'Mullan G."/>
            <person name="Starkenburg S."/>
            <person name="Sayavedra L."/>
            <person name="Poret-Peterson A.T."/>
            <person name="Gentry M.E."/>
            <person name="Bruce D."/>
            <person name="Richardson P."/>
        </authorList>
    </citation>
    <scope>NUCLEOTIDE SEQUENCE [LARGE SCALE GENOMIC DNA]</scope>
    <source>
        <strain>DSM 10229 / NCIMB 13809 / X14</strain>
    </source>
</reference>
<proteinExistence type="inferred from homology"/>
<comment type="similarity">
    <text evidence="1">Belongs to the UPF0335 family.</text>
</comment>
<feature type="chain" id="PRO_1000083684" description="UPF0335 protein Nham_1221">
    <location>
        <begin position="1"/>
        <end position="89"/>
    </location>
</feature>
<sequence>MATAVAAKEEPATRFAKDQLKAIIERIERLEEEKKTLSDDIRDVYAEAKGNGYDVKALRTIVRMRKQDANERAEQETILETYMQALGML</sequence>
<dbReference type="EMBL" id="CP000319">
    <property type="protein sequence ID" value="ABE62049.1"/>
    <property type="molecule type" value="Genomic_DNA"/>
</dbReference>
<dbReference type="RefSeq" id="WP_011509742.1">
    <property type="nucleotide sequence ID" value="NC_007964.1"/>
</dbReference>
<dbReference type="SMR" id="Q1QNZ8"/>
<dbReference type="STRING" id="323097.Nham_1221"/>
<dbReference type="KEGG" id="nha:Nham_1221"/>
<dbReference type="eggNOG" id="COG3750">
    <property type="taxonomic scope" value="Bacteria"/>
</dbReference>
<dbReference type="HOGENOM" id="CLU_158651_2_0_5"/>
<dbReference type="OrthoDB" id="9813793at2"/>
<dbReference type="Proteomes" id="UP000001953">
    <property type="component" value="Chromosome"/>
</dbReference>
<dbReference type="GO" id="GO:0003677">
    <property type="term" value="F:DNA binding"/>
    <property type="evidence" value="ECO:0007669"/>
    <property type="project" value="InterPro"/>
</dbReference>
<dbReference type="HAMAP" id="MF_00797">
    <property type="entry name" value="UPF0335"/>
    <property type="match status" value="1"/>
</dbReference>
<dbReference type="InterPro" id="IPR018753">
    <property type="entry name" value="GapR-like"/>
</dbReference>
<dbReference type="InterPro" id="IPR046367">
    <property type="entry name" value="GapR-like_DNA-bd"/>
</dbReference>
<dbReference type="NCBIfam" id="NF010247">
    <property type="entry name" value="PRK13694.1"/>
    <property type="match status" value="1"/>
</dbReference>
<dbReference type="Pfam" id="PF10073">
    <property type="entry name" value="GapR_DNA-bd"/>
    <property type="match status" value="1"/>
</dbReference>
<keyword id="KW-1185">Reference proteome</keyword>
<accession>Q1QNZ8</accession>
<organism>
    <name type="scientific">Nitrobacter hamburgensis (strain DSM 10229 / NCIMB 13809 / X14)</name>
    <dbReference type="NCBI Taxonomy" id="323097"/>
    <lineage>
        <taxon>Bacteria</taxon>
        <taxon>Pseudomonadati</taxon>
        <taxon>Pseudomonadota</taxon>
        <taxon>Alphaproteobacteria</taxon>
        <taxon>Hyphomicrobiales</taxon>
        <taxon>Nitrobacteraceae</taxon>
        <taxon>Nitrobacter</taxon>
    </lineage>
</organism>
<gene>
    <name type="ordered locus">Nham_1221</name>
</gene>
<name>Y1221_NITHX</name>
<protein>
    <recommendedName>
        <fullName evidence="1">UPF0335 protein Nham_1221</fullName>
    </recommendedName>
</protein>